<evidence type="ECO:0000255" key="1">
    <source>
        <dbReference type="HAMAP-Rule" id="MF_00016"/>
    </source>
</evidence>
<feature type="chain" id="PRO_1000074094" description="Holliday junction branch migration complex subunit RuvB">
    <location>
        <begin position="1"/>
        <end position="348"/>
    </location>
</feature>
<feature type="region of interest" description="Large ATPase domain (RuvB-L)" evidence="1">
    <location>
        <begin position="4"/>
        <end position="184"/>
    </location>
</feature>
<feature type="region of interest" description="Small ATPAse domain (RuvB-S)" evidence="1">
    <location>
        <begin position="185"/>
        <end position="255"/>
    </location>
</feature>
<feature type="region of interest" description="Head domain (RuvB-H)" evidence="1">
    <location>
        <begin position="258"/>
        <end position="348"/>
    </location>
</feature>
<feature type="binding site" evidence="1">
    <location>
        <position position="23"/>
    </location>
    <ligand>
        <name>ATP</name>
        <dbReference type="ChEBI" id="CHEBI:30616"/>
    </ligand>
</feature>
<feature type="binding site" evidence="1">
    <location>
        <position position="24"/>
    </location>
    <ligand>
        <name>ATP</name>
        <dbReference type="ChEBI" id="CHEBI:30616"/>
    </ligand>
</feature>
<feature type="binding site" evidence="1">
    <location>
        <position position="65"/>
    </location>
    <ligand>
        <name>ATP</name>
        <dbReference type="ChEBI" id="CHEBI:30616"/>
    </ligand>
</feature>
<feature type="binding site" evidence="1">
    <location>
        <position position="68"/>
    </location>
    <ligand>
        <name>ATP</name>
        <dbReference type="ChEBI" id="CHEBI:30616"/>
    </ligand>
</feature>
<feature type="binding site" evidence="1">
    <location>
        <position position="69"/>
    </location>
    <ligand>
        <name>ATP</name>
        <dbReference type="ChEBI" id="CHEBI:30616"/>
    </ligand>
</feature>
<feature type="binding site" evidence="1">
    <location>
        <position position="69"/>
    </location>
    <ligand>
        <name>Mg(2+)</name>
        <dbReference type="ChEBI" id="CHEBI:18420"/>
    </ligand>
</feature>
<feature type="binding site" evidence="1">
    <location>
        <position position="70"/>
    </location>
    <ligand>
        <name>ATP</name>
        <dbReference type="ChEBI" id="CHEBI:30616"/>
    </ligand>
</feature>
<feature type="binding site" evidence="1">
    <location>
        <begin position="131"/>
        <end position="133"/>
    </location>
    <ligand>
        <name>ATP</name>
        <dbReference type="ChEBI" id="CHEBI:30616"/>
    </ligand>
</feature>
<feature type="binding site" evidence="1">
    <location>
        <position position="174"/>
    </location>
    <ligand>
        <name>ATP</name>
        <dbReference type="ChEBI" id="CHEBI:30616"/>
    </ligand>
</feature>
<feature type="binding site" evidence="1">
    <location>
        <position position="184"/>
    </location>
    <ligand>
        <name>ATP</name>
        <dbReference type="ChEBI" id="CHEBI:30616"/>
    </ligand>
</feature>
<feature type="binding site" evidence="1">
    <location>
        <position position="221"/>
    </location>
    <ligand>
        <name>ATP</name>
        <dbReference type="ChEBI" id="CHEBI:30616"/>
    </ligand>
</feature>
<feature type="binding site" evidence="1">
    <location>
        <position position="294"/>
    </location>
    <ligand>
        <name>DNA</name>
        <dbReference type="ChEBI" id="CHEBI:16991"/>
    </ligand>
</feature>
<feature type="binding site" evidence="1">
    <location>
        <position position="313"/>
    </location>
    <ligand>
        <name>DNA</name>
        <dbReference type="ChEBI" id="CHEBI:16991"/>
    </ligand>
</feature>
<feature type="binding site" evidence="1">
    <location>
        <position position="318"/>
    </location>
    <ligand>
        <name>DNA</name>
        <dbReference type="ChEBI" id="CHEBI:16991"/>
    </ligand>
</feature>
<protein>
    <recommendedName>
        <fullName evidence="1">Holliday junction branch migration complex subunit RuvB</fullName>
        <ecNumber evidence="1">3.6.4.-</ecNumber>
    </recommendedName>
</protein>
<comment type="function">
    <text evidence="1">The RuvA-RuvB-RuvC complex processes Holliday junction (HJ) DNA during genetic recombination and DNA repair, while the RuvA-RuvB complex plays an important role in the rescue of blocked DNA replication forks via replication fork reversal (RFR). RuvA specifically binds to HJ cruciform DNA, conferring on it an open structure. The RuvB hexamer acts as an ATP-dependent pump, pulling dsDNA into and through the RuvAB complex. RuvB forms 2 homohexamers on either side of HJ DNA bound by 1 or 2 RuvA tetramers; 4 subunits per hexamer contact DNA at a time. Coordinated motions by a converter formed by DNA-disengaged RuvB subunits stimulates ATP hydrolysis and nucleotide exchange. Immobilization of the converter enables RuvB to convert the ATP-contained energy into a lever motion, pulling 2 nucleotides of DNA out of the RuvA tetramer per ATP hydrolyzed, thus driving DNA branch migration. The RuvB motors rotate together with the DNA substrate, which together with the progressing nucleotide cycle form the mechanistic basis for DNA recombination by continuous HJ branch migration. Branch migration allows RuvC to scan DNA until it finds its consensus sequence, where it cleaves and resolves cruciform DNA.</text>
</comment>
<comment type="catalytic activity">
    <reaction evidence="1">
        <text>ATP + H2O = ADP + phosphate + H(+)</text>
        <dbReference type="Rhea" id="RHEA:13065"/>
        <dbReference type="ChEBI" id="CHEBI:15377"/>
        <dbReference type="ChEBI" id="CHEBI:15378"/>
        <dbReference type="ChEBI" id="CHEBI:30616"/>
        <dbReference type="ChEBI" id="CHEBI:43474"/>
        <dbReference type="ChEBI" id="CHEBI:456216"/>
    </reaction>
</comment>
<comment type="subunit">
    <text evidence="1">Homohexamer. Forms an RuvA(8)-RuvB(12)-Holliday junction (HJ) complex. HJ DNA is sandwiched between 2 RuvA tetramers; dsDNA enters through RuvA and exits via RuvB. An RuvB hexamer assembles on each DNA strand where it exits the tetramer. Each RuvB hexamer is contacted by two RuvA subunits (via domain III) on 2 adjacent RuvB subunits; this complex drives branch migration. In the full resolvosome a probable DNA-RuvA(4)-RuvB(12)-RuvC(2) complex forms which resolves the HJ.</text>
</comment>
<comment type="subcellular location">
    <subcellularLocation>
        <location evidence="1">Cytoplasm</location>
    </subcellularLocation>
</comment>
<comment type="domain">
    <text evidence="1">Has 3 domains, the large (RuvB-L) and small ATPase (RuvB-S) domains and the C-terminal head (RuvB-H) domain. The head domain binds DNA, while the ATPase domains jointly bind ATP, ADP or are empty depending on the state of the subunit in the translocation cycle. During a single DNA translocation step the structure of each domain remains the same, but their relative positions change.</text>
</comment>
<comment type="similarity">
    <text evidence="1">Belongs to the RuvB family.</text>
</comment>
<accession>B0KTJ2</accession>
<keyword id="KW-0067">ATP-binding</keyword>
<keyword id="KW-0963">Cytoplasm</keyword>
<keyword id="KW-0227">DNA damage</keyword>
<keyword id="KW-0233">DNA recombination</keyword>
<keyword id="KW-0234">DNA repair</keyword>
<keyword id="KW-0238">DNA-binding</keyword>
<keyword id="KW-0378">Hydrolase</keyword>
<keyword id="KW-0547">Nucleotide-binding</keyword>
<reference key="1">
    <citation type="submission" date="2008-01" db="EMBL/GenBank/DDBJ databases">
        <title>Complete sequence of Pseudomonas putida GB-1.</title>
        <authorList>
            <consortium name="US DOE Joint Genome Institute"/>
            <person name="Copeland A."/>
            <person name="Lucas S."/>
            <person name="Lapidus A."/>
            <person name="Barry K."/>
            <person name="Glavina del Rio T."/>
            <person name="Dalin E."/>
            <person name="Tice H."/>
            <person name="Pitluck S."/>
            <person name="Bruce D."/>
            <person name="Goodwin L."/>
            <person name="Chertkov O."/>
            <person name="Brettin T."/>
            <person name="Detter J.C."/>
            <person name="Han C."/>
            <person name="Kuske C.R."/>
            <person name="Schmutz J."/>
            <person name="Larimer F."/>
            <person name="Land M."/>
            <person name="Hauser L."/>
            <person name="Kyrpides N."/>
            <person name="Kim E."/>
            <person name="McCarthy J.K."/>
            <person name="Richardson P."/>
        </authorList>
    </citation>
    <scope>NUCLEOTIDE SEQUENCE [LARGE SCALE GENOMIC DNA]</scope>
    <source>
        <strain>GB-1</strain>
    </source>
</reference>
<organism>
    <name type="scientific">Pseudomonas putida (strain GB-1)</name>
    <dbReference type="NCBI Taxonomy" id="76869"/>
    <lineage>
        <taxon>Bacteria</taxon>
        <taxon>Pseudomonadati</taxon>
        <taxon>Pseudomonadota</taxon>
        <taxon>Gammaproteobacteria</taxon>
        <taxon>Pseudomonadales</taxon>
        <taxon>Pseudomonadaceae</taxon>
        <taxon>Pseudomonas</taxon>
    </lineage>
</organism>
<name>RUVB_PSEPG</name>
<sequence>MIEADRLIAASGRDREEVQDRAIRPLSLDDYIGQPVVREQMALFIQAARGRSESLDHTLIFGPPGLGKTTLANIIAHEMGVSVKSTSGPILERPGDLAAMLTNLEPHDVLFIDEIHRLSPVVEEVLYPAMEDFQLDIMIGEGPAARSIKLDLPPFTLVGATTRAGMLTNPLRDRFGIVQRLEFYSDKDLATIVSRSANILGLAIEDLGAYEIARRARGTPRIANRLLRRVRDYAEVRGKGQITKAVADMALNLLDVDERGFDHSDRRLLLTMIEKFDGGPVGVDNLAAAISEERHTIEDVLEPYLIQQGYIMRTPRGRVVTRHAYLHFGLNIPGRLGEGGDFSEPGDE</sequence>
<proteinExistence type="inferred from homology"/>
<gene>
    <name evidence="1" type="primary">ruvB</name>
    <name type="ordered locus">PputGB1_4201</name>
</gene>
<dbReference type="EC" id="3.6.4.-" evidence="1"/>
<dbReference type="EMBL" id="CP000926">
    <property type="protein sequence ID" value="ABZ00090.1"/>
    <property type="molecule type" value="Genomic_DNA"/>
</dbReference>
<dbReference type="RefSeq" id="WP_012273767.1">
    <property type="nucleotide sequence ID" value="NC_010322.1"/>
</dbReference>
<dbReference type="SMR" id="B0KTJ2"/>
<dbReference type="KEGG" id="ppg:PputGB1_4201"/>
<dbReference type="eggNOG" id="COG2255">
    <property type="taxonomic scope" value="Bacteria"/>
</dbReference>
<dbReference type="HOGENOM" id="CLU_055599_1_0_6"/>
<dbReference type="Proteomes" id="UP000002157">
    <property type="component" value="Chromosome"/>
</dbReference>
<dbReference type="GO" id="GO:0005737">
    <property type="term" value="C:cytoplasm"/>
    <property type="evidence" value="ECO:0007669"/>
    <property type="project" value="UniProtKB-SubCell"/>
</dbReference>
<dbReference type="GO" id="GO:0048476">
    <property type="term" value="C:Holliday junction resolvase complex"/>
    <property type="evidence" value="ECO:0007669"/>
    <property type="project" value="UniProtKB-UniRule"/>
</dbReference>
<dbReference type="GO" id="GO:0005524">
    <property type="term" value="F:ATP binding"/>
    <property type="evidence" value="ECO:0007669"/>
    <property type="project" value="UniProtKB-UniRule"/>
</dbReference>
<dbReference type="GO" id="GO:0016887">
    <property type="term" value="F:ATP hydrolysis activity"/>
    <property type="evidence" value="ECO:0007669"/>
    <property type="project" value="InterPro"/>
</dbReference>
<dbReference type="GO" id="GO:0000400">
    <property type="term" value="F:four-way junction DNA binding"/>
    <property type="evidence" value="ECO:0007669"/>
    <property type="project" value="UniProtKB-UniRule"/>
</dbReference>
<dbReference type="GO" id="GO:0009378">
    <property type="term" value="F:four-way junction helicase activity"/>
    <property type="evidence" value="ECO:0007669"/>
    <property type="project" value="InterPro"/>
</dbReference>
<dbReference type="GO" id="GO:0006310">
    <property type="term" value="P:DNA recombination"/>
    <property type="evidence" value="ECO:0007669"/>
    <property type="project" value="UniProtKB-UniRule"/>
</dbReference>
<dbReference type="GO" id="GO:0006281">
    <property type="term" value="P:DNA repair"/>
    <property type="evidence" value="ECO:0007669"/>
    <property type="project" value="UniProtKB-UniRule"/>
</dbReference>
<dbReference type="CDD" id="cd00009">
    <property type="entry name" value="AAA"/>
    <property type="match status" value="1"/>
</dbReference>
<dbReference type="FunFam" id="1.10.10.10:FF:000086">
    <property type="entry name" value="Holliday junction ATP-dependent DNA helicase RuvB"/>
    <property type="match status" value="1"/>
</dbReference>
<dbReference type="FunFam" id="1.10.8.60:FF:000023">
    <property type="entry name" value="Holliday junction ATP-dependent DNA helicase RuvB"/>
    <property type="match status" value="1"/>
</dbReference>
<dbReference type="FunFam" id="3.40.50.300:FF:000073">
    <property type="entry name" value="Holliday junction ATP-dependent DNA helicase RuvB"/>
    <property type="match status" value="1"/>
</dbReference>
<dbReference type="Gene3D" id="1.10.8.60">
    <property type="match status" value="1"/>
</dbReference>
<dbReference type="Gene3D" id="3.40.50.300">
    <property type="entry name" value="P-loop containing nucleotide triphosphate hydrolases"/>
    <property type="match status" value="1"/>
</dbReference>
<dbReference type="Gene3D" id="1.10.10.10">
    <property type="entry name" value="Winged helix-like DNA-binding domain superfamily/Winged helix DNA-binding domain"/>
    <property type="match status" value="1"/>
</dbReference>
<dbReference type="HAMAP" id="MF_00016">
    <property type="entry name" value="DNA_HJ_migration_RuvB"/>
    <property type="match status" value="1"/>
</dbReference>
<dbReference type="InterPro" id="IPR003593">
    <property type="entry name" value="AAA+_ATPase"/>
</dbReference>
<dbReference type="InterPro" id="IPR041445">
    <property type="entry name" value="AAA_lid_4"/>
</dbReference>
<dbReference type="InterPro" id="IPR004605">
    <property type="entry name" value="DNA_helicase_Holl-junc_RuvB"/>
</dbReference>
<dbReference type="InterPro" id="IPR027417">
    <property type="entry name" value="P-loop_NTPase"/>
</dbReference>
<dbReference type="InterPro" id="IPR008824">
    <property type="entry name" value="RuvB-like_N"/>
</dbReference>
<dbReference type="InterPro" id="IPR008823">
    <property type="entry name" value="RuvB_C"/>
</dbReference>
<dbReference type="InterPro" id="IPR036388">
    <property type="entry name" value="WH-like_DNA-bd_sf"/>
</dbReference>
<dbReference type="InterPro" id="IPR036390">
    <property type="entry name" value="WH_DNA-bd_sf"/>
</dbReference>
<dbReference type="NCBIfam" id="NF000868">
    <property type="entry name" value="PRK00080.1"/>
    <property type="match status" value="1"/>
</dbReference>
<dbReference type="NCBIfam" id="TIGR00635">
    <property type="entry name" value="ruvB"/>
    <property type="match status" value="1"/>
</dbReference>
<dbReference type="PANTHER" id="PTHR42848">
    <property type="match status" value="1"/>
</dbReference>
<dbReference type="PANTHER" id="PTHR42848:SF1">
    <property type="entry name" value="HOLLIDAY JUNCTION BRANCH MIGRATION COMPLEX SUBUNIT RUVB"/>
    <property type="match status" value="1"/>
</dbReference>
<dbReference type="Pfam" id="PF17864">
    <property type="entry name" value="AAA_lid_4"/>
    <property type="match status" value="1"/>
</dbReference>
<dbReference type="Pfam" id="PF05491">
    <property type="entry name" value="RuvB_C"/>
    <property type="match status" value="1"/>
</dbReference>
<dbReference type="Pfam" id="PF05496">
    <property type="entry name" value="RuvB_N"/>
    <property type="match status" value="1"/>
</dbReference>
<dbReference type="SMART" id="SM00382">
    <property type="entry name" value="AAA"/>
    <property type="match status" value="1"/>
</dbReference>
<dbReference type="SUPFAM" id="SSF52540">
    <property type="entry name" value="P-loop containing nucleoside triphosphate hydrolases"/>
    <property type="match status" value="1"/>
</dbReference>
<dbReference type="SUPFAM" id="SSF46785">
    <property type="entry name" value="Winged helix' DNA-binding domain"/>
    <property type="match status" value="1"/>
</dbReference>